<dbReference type="EMBL" id="CP001078">
    <property type="protein sequence ID" value="ACD52458.1"/>
    <property type="molecule type" value="Genomic_DNA"/>
</dbReference>
<dbReference type="RefSeq" id="WP_003371919.1">
    <property type="nucleotide sequence ID" value="NC_010723.1"/>
</dbReference>
<dbReference type="SMR" id="B2V2I6"/>
<dbReference type="KEGG" id="cbt:CLH_0859"/>
<dbReference type="HOGENOM" id="CLU_017633_0_7_9"/>
<dbReference type="GO" id="GO:0005737">
    <property type="term" value="C:cytoplasm"/>
    <property type="evidence" value="ECO:0007669"/>
    <property type="project" value="UniProtKB-SubCell"/>
</dbReference>
<dbReference type="GO" id="GO:0005524">
    <property type="term" value="F:ATP binding"/>
    <property type="evidence" value="ECO:0007669"/>
    <property type="project" value="InterPro"/>
</dbReference>
<dbReference type="GO" id="GO:0031072">
    <property type="term" value="F:heat shock protein binding"/>
    <property type="evidence" value="ECO:0007669"/>
    <property type="project" value="InterPro"/>
</dbReference>
<dbReference type="GO" id="GO:0051082">
    <property type="term" value="F:unfolded protein binding"/>
    <property type="evidence" value="ECO:0007669"/>
    <property type="project" value="UniProtKB-UniRule"/>
</dbReference>
<dbReference type="GO" id="GO:0008270">
    <property type="term" value="F:zinc ion binding"/>
    <property type="evidence" value="ECO:0007669"/>
    <property type="project" value="UniProtKB-UniRule"/>
</dbReference>
<dbReference type="GO" id="GO:0051085">
    <property type="term" value="P:chaperone cofactor-dependent protein refolding"/>
    <property type="evidence" value="ECO:0007669"/>
    <property type="project" value="TreeGrafter"/>
</dbReference>
<dbReference type="GO" id="GO:0006260">
    <property type="term" value="P:DNA replication"/>
    <property type="evidence" value="ECO:0007669"/>
    <property type="project" value="UniProtKB-KW"/>
</dbReference>
<dbReference type="GO" id="GO:0042026">
    <property type="term" value="P:protein refolding"/>
    <property type="evidence" value="ECO:0007669"/>
    <property type="project" value="TreeGrafter"/>
</dbReference>
<dbReference type="GO" id="GO:0009408">
    <property type="term" value="P:response to heat"/>
    <property type="evidence" value="ECO:0007669"/>
    <property type="project" value="InterPro"/>
</dbReference>
<dbReference type="CDD" id="cd06257">
    <property type="entry name" value="DnaJ"/>
    <property type="match status" value="1"/>
</dbReference>
<dbReference type="CDD" id="cd10747">
    <property type="entry name" value="DnaJ_C"/>
    <property type="match status" value="1"/>
</dbReference>
<dbReference type="CDD" id="cd10719">
    <property type="entry name" value="DnaJ_zf"/>
    <property type="match status" value="1"/>
</dbReference>
<dbReference type="FunFam" id="1.10.287.110:FF:000031">
    <property type="entry name" value="Molecular chaperone DnaJ"/>
    <property type="match status" value="1"/>
</dbReference>
<dbReference type="FunFam" id="2.10.230.10:FF:000002">
    <property type="entry name" value="Molecular chaperone DnaJ"/>
    <property type="match status" value="1"/>
</dbReference>
<dbReference type="FunFam" id="2.60.260.20:FF:000004">
    <property type="entry name" value="Molecular chaperone DnaJ"/>
    <property type="match status" value="1"/>
</dbReference>
<dbReference type="Gene3D" id="1.10.287.110">
    <property type="entry name" value="DnaJ domain"/>
    <property type="match status" value="1"/>
</dbReference>
<dbReference type="Gene3D" id="2.10.230.10">
    <property type="entry name" value="Heat shock protein DnaJ, cysteine-rich domain"/>
    <property type="match status" value="1"/>
</dbReference>
<dbReference type="Gene3D" id="2.60.260.20">
    <property type="entry name" value="Urease metallochaperone UreE, N-terminal domain"/>
    <property type="match status" value="2"/>
</dbReference>
<dbReference type="HAMAP" id="MF_01152">
    <property type="entry name" value="DnaJ"/>
    <property type="match status" value="1"/>
</dbReference>
<dbReference type="InterPro" id="IPR012724">
    <property type="entry name" value="DnaJ"/>
</dbReference>
<dbReference type="InterPro" id="IPR002939">
    <property type="entry name" value="DnaJ_C"/>
</dbReference>
<dbReference type="InterPro" id="IPR001623">
    <property type="entry name" value="DnaJ_domain"/>
</dbReference>
<dbReference type="InterPro" id="IPR018253">
    <property type="entry name" value="DnaJ_domain_CS"/>
</dbReference>
<dbReference type="InterPro" id="IPR008971">
    <property type="entry name" value="HSP40/DnaJ_pept-bd"/>
</dbReference>
<dbReference type="InterPro" id="IPR001305">
    <property type="entry name" value="HSP_DnaJ_Cys-rich_dom"/>
</dbReference>
<dbReference type="InterPro" id="IPR036410">
    <property type="entry name" value="HSP_DnaJ_Cys-rich_dom_sf"/>
</dbReference>
<dbReference type="InterPro" id="IPR036869">
    <property type="entry name" value="J_dom_sf"/>
</dbReference>
<dbReference type="NCBIfam" id="TIGR02349">
    <property type="entry name" value="DnaJ_bact"/>
    <property type="match status" value="1"/>
</dbReference>
<dbReference type="NCBIfam" id="NF008035">
    <property type="entry name" value="PRK10767.1"/>
    <property type="match status" value="1"/>
</dbReference>
<dbReference type="NCBIfam" id="NF010890">
    <property type="entry name" value="PRK14297.1"/>
    <property type="match status" value="1"/>
</dbReference>
<dbReference type="PANTHER" id="PTHR43096:SF48">
    <property type="entry name" value="CHAPERONE PROTEIN DNAJ"/>
    <property type="match status" value="1"/>
</dbReference>
<dbReference type="PANTHER" id="PTHR43096">
    <property type="entry name" value="DNAJ HOMOLOG 1, MITOCHONDRIAL-RELATED"/>
    <property type="match status" value="1"/>
</dbReference>
<dbReference type="Pfam" id="PF00226">
    <property type="entry name" value="DnaJ"/>
    <property type="match status" value="1"/>
</dbReference>
<dbReference type="Pfam" id="PF01556">
    <property type="entry name" value="DnaJ_C"/>
    <property type="match status" value="1"/>
</dbReference>
<dbReference type="Pfam" id="PF00684">
    <property type="entry name" value="DnaJ_CXXCXGXG"/>
    <property type="match status" value="1"/>
</dbReference>
<dbReference type="PRINTS" id="PR00625">
    <property type="entry name" value="JDOMAIN"/>
</dbReference>
<dbReference type="SMART" id="SM00271">
    <property type="entry name" value="DnaJ"/>
    <property type="match status" value="1"/>
</dbReference>
<dbReference type="SUPFAM" id="SSF46565">
    <property type="entry name" value="Chaperone J-domain"/>
    <property type="match status" value="1"/>
</dbReference>
<dbReference type="SUPFAM" id="SSF57938">
    <property type="entry name" value="DnaJ/Hsp40 cysteine-rich domain"/>
    <property type="match status" value="1"/>
</dbReference>
<dbReference type="SUPFAM" id="SSF49493">
    <property type="entry name" value="HSP40/DnaJ peptide-binding domain"/>
    <property type="match status" value="2"/>
</dbReference>
<dbReference type="PROSITE" id="PS00636">
    <property type="entry name" value="DNAJ_1"/>
    <property type="match status" value="1"/>
</dbReference>
<dbReference type="PROSITE" id="PS50076">
    <property type="entry name" value="DNAJ_2"/>
    <property type="match status" value="1"/>
</dbReference>
<dbReference type="PROSITE" id="PS51188">
    <property type="entry name" value="ZF_CR"/>
    <property type="match status" value="1"/>
</dbReference>
<keyword id="KW-0143">Chaperone</keyword>
<keyword id="KW-0963">Cytoplasm</keyword>
<keyword id="KW-0235">DNA replication</keyword>
<keyword id="KW-0479">Metal-binding</keyword>
<keyword id="KW-0677">Repeat</keyword>
<keyword id="KW-0346">Stress response</keyword>
<keyword id="KW-0862">Zinc</keyword>
<keyword id="KW-0863">Zinc-finger</keyword>
<protein>
    <recommendedName>
        <fullName evidence="1">Chaperone protein DnaJ</fullName>
    </recommendedName>
</protein>
<evidence type="ECO:0000255" key="1">
    <source>
        <dbReference type="HAMAP-Rule" id="MF_01152"/>
    </source>
</evidence>
<proteinExistence type="inferred from homology"/>
<organism>
    <name type="scientific">Clostridium botulinum (strain Alaska E43 / Type E3)</name>
    <dbReference type="NCBI Taxonomy" id="508767"/>
    <lineage>
        <taxon>Bacteria</taxon>
        <taxon>Bacillati</taxon>
        <taxon>Bacillota</taxon>
        <taxon>Clostridia</taxon>
        <taxon>Eubacteriales</taxon>
        <taxon>Clostridiaceae</taxon>
        <taxon>Clostridium</taxon>
    </lineage>
</organism>
<feature type="chain" id="PRO_1000164250" description="Chaperone protein DnaJ">
    <location>
        <begin position="1"/>
        <end position="373"/>
    </location>
</feature>
<feature type="domain" description="J" evidence="1">
    <location>
        <begin position="5"/>
        <end position="70"/>
    </location>
</feature>
<feature type="repeat" description="CXXCXGXG motif">
    <location>
        <begin position="145"/>
        <end position="152"/>
    </location>
</feature>
<feature type="repeat" description="CXXCXGXG motif">
    <location>
        <begin position="162"/>
        <end position="169"/>
    </location>
</feature>
<feature type="repeat" description="CXXCXGXG motif">
    <location>
        <begin position="188"/>
        <end position="195"/>
    </location>
</feature>
<feature type="repeat" description="CXXCXGXG motif">
    <location>
        <begin position="202"/>
        <end position="209"/>
    </location>
</feature>
<feature type="zinc finger region" description="CR-type" evidence="1">
    <location>
        <begin position="132"/>
        <end position="214"/>
    </location>
</feature>
<feature type="binding site" evidence="1">
    <location>
        <position position="145"/>
    </location>
    <ligand>
        <name>Zn(2+)</name>
        <dbReference type="ChEBI" id="CHEBI:29105"/>
        <label>1</label>
    </ligand>
</feature>
<feature type="binding site" evidence="1">
    <location>
        <position position="148"/>
    </location>
    <ligand>
        <name>Zn(2+)</name>
        <dbReference type="ChEBI" id="CHEBI:29105"/>
        <label>1</label>
    </ligand>
</feature>
<feature type="binding site" evidence="1">
    <location>
        <position position="162"/>
    </location>
    <ligand>
        <name>Zn(2+)</name>
        <dbReference type="ChEBI" id="CHEBI:29105"/>
        <label>2</label>
    </ligand>
</feature>
<feature type="binding site" evidence="1">
    <location>
        <position position="165"/>
    </location>
    <ligand>
        <name>Zn(2+)</name>
        <dbReference type="ChEBI" id="CHEBI:29105"/>
        <label>2</label>
    </ligand>
</feature>
<feature type="binding site" evidence="1">
    <location>
        <position position="188"/>
    </location>
    <ligand>
        <name>Zn(2+)</name>
        <dbReference type="ChEBI" id="CHEBI:29105"/>
        <label>2</label>
    </ligand>
</feature>
<feature type="binding site" evidence="1">
    <location>
        <position position="191"/>
    </location>
    <ligand>
        <name>Zn(2+)</name>
        <dbReference type="ChEBI" id="CHEBI:29105"/>
        <label>2</label>
    </ligand>
</feature>
<feature type="binding site" evidence="1">
    <location>
        <position position="202"/>
    </location>
    <ligand>
        <name>Zn(2+)</name>
        <dbReference type="ChEBI" id="CHEBI:29105"/>
        <label>1</label>
    </ligand>
</feature>
<feature type="binding site" evidence="1">
    <location>
        <position position="205"/>
    </location>
    <ligand>
        <name>Zn(2+)</name>
        <dbReference type="ChEBI" id="CHEBI:29105"/>
        <label>1</label>
    </ligand>
</feature>
<sequence length="373" mass="40521">MANKDYYEVLGLQKGASDDEIKKAFRKLAIKYHPDKNKGNTEAEEKFKEINEAYQVLSDPEKKSNYDQFGSADFNGGGFGSGGFGGFDMGGFGDIFDMFTGGGSSTRRRNGPVNGNDIEYTLTLTFEEAVFGVEKEITVNRSESCEHCNGSGAEPGTSKKTCPTCSGTGQVRVQRQTPLGSFVSTSTCDRCSGTGNIIEKPCTHCRGNGNVRKTRKINVNIPAGVDTGNVMPLRGQGEHGLRGGSPGDLYIRINVSPSKEFTRKGNDIYIDTHISMAKAALGTEITVKTVEGNVKYTVPEGTQSGTLFRLKGKGVARVNSTGKGDQYVRVIVDIPKGLNQKQKEALYTFMEACGEEMDENTHSFKKNLFGRKK</sequence>
<reference key="1">
    <citation type="submission" date="2008-05" db="EMBL/GenBank/DDBJ databases">
        <title>Complete genome sequence of Clostridium botulinum E3 str. Alaska E43.</title>
        <authorList>
            <person name="Brinkac L.M."/>
            <person name="Brown J.L."/>
            <person name="Bruce D."/>
            <person name="Detter C."/>
            <person name="Munk C."/>
            <person name="Smith L.A."/>
            <person name="Smith T.J."/>
            <person name="Sutton G."/>
            <person name="Brettin T.S."/>
        </authorList>
    </citation>
    <scope>NUCLEOTIDE SEQUENCE [LARGE SCALE GENOMIC DNA]</scope>
    <source>
        <strain>Alaska E43 / Type E3</strain>
    </source>
</reference>
<comment type="function">
    <text evidence="1">Participates actively in the response to hyperosmotic and heat shock by preventing the aggregation of stress-denatured proteins and by disaggregating proteins, also in an autonomous, DnaK-independent fashion. Unfolded proteins bind initially to DnaJ; upon interaction with the DnaJ-bound protein, DnaK hydrolyzes its bound ATP, resulting in the formation of a stable complex. GrpE releases ADP from DnaK; ATP binding to DnaK triggers the release of the substrate protein, thus completing the reaction cycle. Several rounds of ATP-dependent interactions between DnaJ, DnaK and GrpE are required for fully efficient folding. Also involved, together with DnaK and GrpE, in the DNA replication of plasmids through activation of initiation proteins.</text>
</comment>
<comment type="cofactor">
    <cofactor evidence="1">
        <name>Zn(2+)</name>
        <dbReference type="ChEBI" id="CHEBI:29105"/>
    </cofactor>
    <text evidence="1">Binds 2 Zn(2+) ions per monomer.</text>
</comment>
<comment type="subunit">
    <text evidence="1">Homodimer.</text>
</comment>
<comment type="subcellular location">
    <subcellularLocation>
        <location evidence="1">Cytoplasm</location>
    </subcellularLocation>
</comment>
<comment type="domain">
    <text evidence="1">The J domain is necessary and sufficient to stimulate DnaK ATPase activity. Zinc center 1 plays an important role in the autonomous, DnaK-independent chaperone activity of DnaJ. Zinc center 2 is essential for interaction with DnaK and for DnaJ activity.</text>
</comment>
<comment type="similarity">
    <text evidence="1">Belongs to the DnaJ family.</text>
</comment>
<gene>
    <name evidence="1" type="primary">dnaJ</name>
    <name type="ordered locus">CLH_0859</name>
</gene>
<name>DNAJ_CLOBA</name>
<accession>B2V2I6</accession>